<keyword id="KW-0244">Early protein</keyword>
<reference key="1">
    <citation type="journal article" date="1996" name="Gene">
        <title>Characterization of the vaccinia MVA hemagglutinin gene locus and its evaluation as an insertion site for foreign genes.</title>
        <authorList>
            <person name="Antoine G."/>
            <person name="Scheiflinger F."/>
            <person name="Holzer G."/>
            <person name="Langmann T."/>
            <person name="Falkner F.G."/>
            <person name="Dorner F."/>
        </authorList>
    </citation>
    <scope>NUCLEOTIDE SEQUENCE [GENOMIC DNA]</scope>
</reference>
<reference key="2">
    <citation type="journal article" date="1998" name="Virology">
        <title>The complete genomic sequence of the modified vaccinia Ankara strain: comparison with other orthopoxviruses.</title>
        <authorList>
            <person name="Antoine G."/>
            <person name="Scheiflinger F."/>
            <person name="Dorner F."/>
            <person name="Falkner F.G."/>
        </authorList>
    </citation>
    <scope>NUCLEOTIDE SEQUENCE [LARGE SCALE GENOMIC DNA]</scope>
</reference>
<reference key="3">
    <citation type="submission" date="2004-04" db="EMBL/GenBank/DDBJ databases">
        <authorList>
            <person name="Esposito J.J."/>
            <person name="Frace M."/>
            <person name="Sammons S.A."/>
            <person name="Olsen-Rasmussen M.S."/>
            <person name="Osborne J."/>
            <person name="Khristova M."/>
            <person name="Wohlhueter R.M."/>
        </authorList>
    </citation>
    <scope>NUCLEOTIDE SEQUENCE [LARGE SCALE GENOMIC DNA]</scope>
    <source>
        <strain>Isolate Acambis 3000</strain>
    </source>
</reference>
<feature type="chain" id="PRO_0000099345" description="Protein OPG181">
    <location>
        <begin position="1"/>
        <end position="310"/>
    </location>
</feature>
<organismHost>
    <name type="scientific">Homo sapiens</name>
    <name type="common">Human</name>
    <dbReference type="NCBI Taxonomy" id="9606"/>
</organismHost>
<protein>
    <recommendedName>
        <fullName>Protein OPG181</fullName>
    </recommendedName>
</protein>
<dbReference type="EMBL" id="X91135">
    <property type="protein sequence ID" value="CAA62574.1"/>
    <property type="molecule type" value="Genomic_DNA"/>
</dbReference>
<dbReference type="EMBL" id="U94848">
    <property type="protein sequence ID" value="AAB96542.1"/>
    <property type="molecule type" value="Genomic_DNA"/>
</dbReference>
<dbReference type="EMBL" id="AY603355">
    <property type="protein sequence ID" value="AAT10562.1"/>
    <property type="molecule type" value="Genomic_DNA"/>
</dbReference>
<dbReference type="PIR" id="T37437">
    <property type="entry name" value="T37437"/>
</dbReference>
<dbReference type="Proteomes" id="UP000159908">
    <property type="component" value="Segment"/>
</dbReference>
<dbReference type="Proteomes" id="UP000172909">
    <property type="component" value="Segment"/>
</dbReference>
<dbReference type="InterPro" id="IPR007032">
    <property type="entry name" value="Poxvirus_A51"/>
</dbReference>
<dbReference type="Pfam" id="PF04948">
    <property type="entry name" value="Pox_A51"/>
    <property type="match status" value="1"/>
</dbReference>
<accession>Q89181</accession>
<name>PG181_VACCA</name>
<gene>
    <name type="primary">OPG181</name>
    <name type="ordered locus">MVA164R</name>
    <name type="ordered locus">ACAM3000_MVA_164</name>
    <name type="ORF">A51R</name>
</gene>
<organism>
    <name type="scientific">Vaccinia virus (strain Ankara)</name>
    <name type="common">VACV</name>
    <dbReference type="NCBI Taxonomy" id="126794"/>
    <lineage>
        <taxon>Viruses</taxon>
        <taxon>Varidnaviria</taxon>
        <taxon>Bamfordvirae</taxon>
        <taxon>Nucleocytoviricota</taxon>
        <taxon>Pokkesviricetes</taxon>
        <taxon>Chitovirales</taxon>
        <taxon>Poxviridae</taxon>
        <taxon>Chordopoxvirinae</taxon>
        <taxon>Orthopoxvirus</taxon>
        <taxon>Vaccinia virus</taxon>
    </lineage>
</organism>
<sequence length="310" mass="34910">MDGVIVYCLNALVKHGEEINHIKNDFMIKPCCEKVKNVHIGGQSKNNTVIADLPYMDNAVSDVCNSLYKKNVSRISRFANLIKIDDDDKTPTGVYNYFKPKDAIPVIISIGKDRDVCELLISSDKACACIELNSYKVAILPMDVSFFTKGNASLIILLFDFSIDAAPLLRSVTDNNVIISRHQRLHDELPSSNWFKFYISIKSDYCSILYMVVDGSVMHAIADNRTYANISKNILDNTTINDECRCCYFEPQIRILDRDEMLNGSSCDMNRHCIMMNLPDVGEFGSSMLGKYEPDMIKIALSVAGIWKVL</sequence>
<comment type="induction">
    <text>Expressed in the early phase of the viral replicative cycle.</text>
</comment>
<comment type="similarity">
    <text evidence="1">Belongs to the orthopoxvirus OPG181 family.</text>
</comment>
<proteinExistence type="evidence at transcript level"/>
<evidence type="ECO:0000305" key="1"/>